<sequence length="540" mass="59169">MAVSSGNSSVNSSKKLFSGKKGQSIGIVRSMNYKIPGTFGLESGKTLSGVRVEYEMYGKMNADKSNVILICHALTGDAHAAGFHEGDKKPGWWEIVIGPNKAFDTEKYCVICSNILGGCKGSTGPSSIDPETGKHYGISFPVITVKDMVNAQKKLIEHLGVKQLFAVAGGSMGGMQVLQWTVSYPEMVRKAIAIATTASTTPQQIAFGAIGRKAITDDPKWNGGDYYGKEIPSQGLALARMIGHITYLSDASMQNKFGRLQQDTDKSGIKGTTGTEGKNSSEISSEISSISSEISSELSYDFTPNFQVESYLNYKGDNFTKRFDANSYLYITKAVDYFDLAKNGSLIEGFSGVTAKYLVISISSDWLYPPYQSQEIVSALTANGVDARYEEIRSQHGHDAFLLEEGQLSYLLRSFLSHILVSDVMNRNFYTVSRDETIEHSSKLMVKECVSHLPVISEDGKLEGIVTSWDITKAVACKINELDEIITRDVKYVYEDEKIEHASSIMEKHSISALPVIDSEHRIIGIVTSESISALFGKYD</sequence>
<name>METXA_METAC</name>
<keyword id="KW-0012">Acyltransferase</keyword>
<keyword id="KW-0028">Amino-acid biosynthesis</keyword>
<keyword id="KW-0129">CBS domain</keyword>
<keyword id="KW-0963">Cytoplasm</keyword>
<keyword id="KW-0486">Methionine biosynthesis</keyword>
<keyword id="KW-1185">Reference proteome</keyword>
<keyword id="KW-0677">Repeat</keyword>
<keyword id="KW-0808">Transferase</keyword>
<accession>Q8TME4</accession>
<reference key="1">
    <citation type="journal article" date="2002" name="Genome Res.">
        <title>The genome of Methanosarcina acetivorans reveals extensive metabolic and physiological diversity.</title>
        <authorList>
            <person name="Galagan J.E."/>
            <person name="Nusbaum C."/>
            <person name="Roy A."/>
            <person name="Endrizzi M.G."/>
            <person name="Macdonald P."/>
            <person name="FitzHugh W."/>
            <person name="Calvo S."/>
            <person name="Engels R."/>
            <person name="Smirnov S."/>
            <person name="Atnoor D."/>
            <person name="Brown A."/>
            <person name="Allen N."/>
            <person name="Naylor J."/>
            <person name="Stange-Thomann N."/>
            <person name="DeArellano K."/>
            <person name="Johnson R."/>
            <person name="Linton L."/>
            <person name="McEwan P."/>
            <person name="McKernan K."/>
            <person name="Talamas J."/>
            <person name="Tirrell A."/>
            <person name="Ye W."/>
            <person name="Zimmer A."/>
            <person name="Barber R.D."/>
            <person name="Cann I."/>
            <person name="Graham D.E."/>
            <person name="Grahame D.A."/>
            <person name="Guss A.M."/>
            <person name="Hedderich R."/>
            <person name="Ingram-Smith C."/>
            <person name="Kuettner H.C."/>
            <person name="Krzycki J.A."/>
            <person name="Leigh J.A."/>
            <person name="Li W."/>
            <person name="Liu J."/>
            <person name="Mukhopadhyay B."/>
            <person name="Reeve J.N."/>
            <person name="Smith K."/>
            <person name="Springer T.A."/>
            <person name="Umayam L.A."/>
            <person name="White O."/>
            <person name="White R.H."/>
            <person name="de Macario E.C."/>
            <person name="Ferry J.G."/>
            <person name="Jarrell K.F."/>
            <person name="Jing H."/>
            <person name="Macario A.J.L."/>
            <person name="Paulsen I.T."/>
            <person name="Pritchett M."/>
            <person name="Sowers K.R."/>
            <person name="Swanson R.V."/>
            <person name="Zinder S.H."/>
            <person name="Lander E."/>
            <person name="Metcalf W.W."/>
            <person name="Birren B."/>
        </authorList>
    </citation>
    <scope>NUCLEOTIDE SEQUENCE [LARGE SCALE GENOMIC DNA]</scope>
    <source>
        <strain>ATCC 35395 / DSM 2834 / JCM 12185 / C2A</strain>
    </source>
</reference>
<reference key="2">
    <citation type="journal article" date="2017" name="Nat. Chem. Biol.">
        <title>Parallel evolution of non-homologous isofunctional enzymes in methionine biosynthesis.</title>
        <authorList>
            <person name="Bastard K."/>
            <person name="Perret A."/>
            <person name="Mariage A."/>
            <person name="Bessonnet T."/>
            <person name="Pinet-Turpault A."/>
            <person name="Petit J.L."/>
            <person name="Darii E."/>
            <person name="Bazire P."/>
            <person name="Vergne-Vaxelaire C."/>
            <person name="Brewee C."/>
            <person name="Debard A."/>
            <person name="Pellouin V."/>
            <person name="Besnard-Gonnet M."/>
            <person name="Artiguenave F."/>
            <person name="Medigue C."/>
            <person name="Vallenet D."/>
            <person name="Danchin A."/>
            <person name="Zaparucha A."/>
            <person name="Weissenbach J."/>
            <person name="Salanoubat M."/>
            <person name="de Berardinis V."/>
        </authorList>
    </citation>
    <scope>FUNCTION</scope>
    <scope>CATALYTIC ACTIVITY</scope>
</reference>
<proteinExistence type="evidence at protein level"/>
<comment type="function">
    <text evidence="3">Transfers an acetyl group from acetyl-CoA to L-homoserine, forming acetyl-L-homoserine. In vitro, can also use propionyl-CoA or butiryl-CoA as acyl donor.</text>
</comment>
<comment type="catalytic activity">
    <reaction evidence="1 3">
        <text>L-homoserine + acetyl-CoA = O-acetyl-L-homoserine + CoA</text>
        <dbReference type="Rhea" id="RHEA:13701"/>
        <dbReference type="ChEBI" id="CHEBI:57287"/>
        <dbReference type="ChEBI" id="CHEBI:57288"/>
        <dbReference type="ChEBI" id="CHEBI:57476"/>
        <dbReference type="ChEBI" id="CHEBI:57716"/>
        <dbReference type="EC" id="2.3.1.31"/>
    </reaction>
</comment>
<comment type="pathway">
    <text evidence="1">Amino-acid biosynthesis; L-methionine biosynthesis via de novo pathway; O-acetyl-L-homoserine from L-homoserine: step 1/1.</text>
</comment>
<comment type="subunit">
    <text evidence="1">Homodimer.</text>
</comment>
<comment type="subcellular location">
    <subcellularLocation>
        <location evidence="1">Cytoplasm</location>
    </subcellularLocation>
</comment>
<comment type="similarity">
    <text evidence="1">Belongs to the AB hydrolase superfamily. MetX family.</text>
</comment>
<dbReference type="EC" id="2.3.1.31" evidence="1 3"/>
<dbReference type="EMBL" id="AE010299">
    <property type="protein sequence ID" value="AAM06093.1"/>
    <property type="molecule type" value="Genomic_DNA"/>
</dbReference>
<dbReference type="RefSeq" id="WP_011022674.1">
    <property type="nucleotide sequence ID" value="NC_003552.1"/>
</dbReference>
<dbReference type="SMR" id="Q8TME4"/>
<dbReference type="STRING" id="188937.MA_2714"/>
<dbReference type="ESTHER" id="metac-META">
    <property type="family name" value="Homoserine_transacetylase"/>
</dbReference>
<dbReference type="EnsemblBacteria" id="AAM06093">
    <property type="protein sequence ID" value="AAM06093"/>
    <property type="gene ID" value="MA_2714"/>
</dbReference>
<dbReference type="GeneID" id="1474607"/>
<dbReference type="KEGG" id="mac:MA_2714"/>
<dbReference type="HOGENOM" id="CLU_028760_1_1_2"/>
<dbReference type="InParanoid" id="Q8TME4"/>
<dbReference type="OrthoDB" id="295172at2157"/>
<dbReference type="PhylomeDB" id="Q8TME4"/>
<dbReference type="UniPathway" id="UPA00051">
    <property type="reaction ID" value="UER00074"/>
</dbReference>
<dbReference type="Proteomes" id="UP000002487">
    <property type="component" value="Chromosome"/>
</dbReference>
<dbReference type="GO" id="GO:0005737">
    <property type="term" value="C:cytoplasm"/>
    <property type="evidence" value="ECO:0007669"/>
    <property type="project" value="UniProtKB-SubCell"/>
</dbReference>
<dbReference type="GO" id="GO:0004414">
    <property type="term" value="F:homoserine O-acetyltransferase activity"/>
    <property type="evidence" value="ECO:0000318"/>
    <property type="project" value="GO_Central"/>
</dbReference>
<dbReference type="GO" id="GO:0009086">
    <property type="term" value="P:methionine biosynthetic process"/>
    <property type="evidence" value="ECO:0000318"/>
    <property type="project" value="GO_Central"/>
</dbReference>
<dbReference type="CDD" id="cd04605">
    <property type="entry name" value="CBS_pair_arch_MET2_assoc"/>
    <property type="match status" value="1"/>
</dbReference>
<dbReference type="Gene3D" id="1.10.1740.110">
    <property type="match status" value="1"/>
</dbReference>
<dbReference type="Gene3D" id="3.40.50.1820">
    <property type="entry name" value="alpha/beta hydrolase"/>
    <property type="match status" value="1"/>
</dbReference>
<dbReference type="Gene3D" id="3.10.580.10">
    <property type="entry name" value="CBS-domain"/>
    <property type="match status" value="1"/>
</dbReference>
<dbReference type="HAMAP" id="MF_00296">
    <property type="entry name" value="MetX_acyltransf"/>
    <property type="match status" value="1"/>
</dbReference>
<dbReference type="InterPro" id="IPR000073">
    <property type="entry name" value="AB_hydrolase_1"/>
</dbReference>
<dbReference type="InterPro" id="IPR029058">
    <property type="entry name" value="AB_hydrolase_fold"/>
</dbReference>
<dbReference type="InterPro" id="IPR000644">
    <property type="entry name" value="CBS_dom"/>
</dbReference>
<dbReference type="InterPro" id="IPR046342">
    <property type="entry name" value="CBS_dom_sf"/>
</dbReference>
<dbReference type="InterPro" id="IPR008220">
    <property type="entry name" value="HAT_MetX-like"/>
</dbReference>
<dbReference type="NCBIfam" id="TIGR01392">
    <property type="entry name" value="homoserO_Ac_trn"/>
    <property type="match status" value="1"/>
</dbReference>
<dbReference type="NCBIfam" id="NF001209">
    <property type="entry name" value="PRK00175.1"/>
    <property type="match status" value="1"/>
</dbReference>
<dbReference type="PANTHER" id="PTHR32268">
    <property type="entry name" value="HOMOSERINE O-ACETYLTRANSFERASE"/>
    <property type="match status" value="1"/>
</dbReference>
<dbReference type="PANTHER" id="PTHR32268:SF11">
    <property type="entry name" value="HOMOSERINE O-ACETYLTRANSFERASE"/>
    <property type="match status" value="1"/>
</dbReference>
<dbReference type="Pfam" id="PF00561">
    <property type="entry name" value="Abhydrolase_1"/>
    <property type="match status" value="1"/>
</dbReference>
<dbReference type="Pfam" id="PF00571">
    <property type="entry name" value="CBS"/>
    <property type="match status" value="2"/>
</dbReference>
<dbReference type="SMART" id="SM00116">
    <property type="entry name" value="CBS"/>
    <property type="match status" value="2"/>
</dbReference>
<dbReference type="SUPFAM" id="SSF53474">
    <property type="entry name" value="alpha/beta-Hydrolases"/>
    <property type="match status" value="1"/>
</dbReference>
<dbReference type="SUPFAM" id="SSF54631">
    <property type="entry name" value="CBS-domain pair"/>
    <property type="match status" value="1"/>
</dbReference>
<dbReference type="PROSITE" id="PS51371">
    <property type="entry name" value="CBS"/>
    <property type="match status" value="2"/>
</dbReference>
<gene>
    <name evidence="1 4" type="primary">metXA</name>
    <name evidence="5" type="synonym">metA</name>
    <name evidence="5" type="ordered locus">MA_2714</name>
</gene>
<organism>
    <name type="scientific">Methanosarcina acetivorans (strain ATCC 35395 / DSM 2834 / JCM 12185 / C2A)</name>
    <dbReference type="NCBI Taxonomy" id="188937"/>
    <lineage>
        <taxon>Archaea</taxon>
        <taxon>Methanobacteriati</taxon>
        <taxon>Methanobacteriota</taxon>
        <taxon>Stenosarchaea group</taxon>
        <taxon>Methanomicrobia</taxon>
        <taxon>Methanosarcinales</taxon>
        <taxon>Methanosarcinaceae</taxon>
        <taxon>Methanosarcina</taxon>
    </lineage>
</organism>
<feature type="chain" id="PRO_0000440285" description="Homoserine O-acetyltransferase">
    <location>
        <begin position="1"/>
        <end position="540"/>
    </location>
</feature>
<feature type="domain" description="AB hydrolase-1" evidence="1">
    <location>
        <begin position="66"/>
        <end position="404"/>
    </location>
</feature>
<feature type="domain" description="CBS 1" evidence="1">
    <location>
        <begin position="425"/>
        <end position="484"/>
    </location>
</feature>
<feature type="domain" description="CBS 2" evidence="1">
    <location>
        <begin position="486"/>
        <end position="540"/>
    </location>
</feature>
<feature type="region of interest" description="Disordered" evidence="2">
    <location>
        <begin position="262"/>
        <end position="284"/>
    </location>
</feature>
<feature type="active site" description="Nucleophile" evidence="1">
    <location>
        <position position="171"/>
    </location>
</feature>
<feature type="active site" evidence="1">
    <location>
        <position position="365"/>
    </location>
</feature>
<feature type="active site" evidence="1">
    <location>
        <position position="398"/>
    </location>
</feature>
<feature type="binding site" evidence="1">
    <location>
        <position position="240"/>
    </location>
    <ligand>
        <name>substrate</name>
    </ligand>
</feature>
<feature type="binding site" evidence="1">
    <location>
        <position position="399"/>
    </location>
    <ligand>
        <name>substrate</name>
    </ligand>
</feature>
<protein>
    <recommendedName>
        <fullName evidence="1">Homoserine O-acetyltransferase</fullName>
        <shortName evidence="1 4">HAT</shortName>
        <ecNumber evidence="1 3">2.3.1.31</ecNumber>
    </recommendedName>
    <alternativeName>
        <fullName evidence="1">Homoserine transacetylase</fullName>
        <shortName evidence="1">HTA</shortName>
    </alternativeName>
</protein>
<evidence type="ECO:0000255" key="1">
    <source>
        <dbReference type="HAMAP-Rule" id="MF_00296"/>
    </source>
</evidence>
<evidence type="ECO:0000256" key="2">
    <source>
        <dbReference type="SAM" id="MobiDB-lite"/>
    </source>
</evidence>
<evidence type="ECO:0000269" key="3">
    <source>
    </source>
</evidence>
<evidence type="ECO:0000303" key="4">
    <source>
    </source>
</evidence>
<evidence type="ECO:0000312" key="5">
    <source>
        <dbReference type="EMBL" id="AAM06093.1"/>
    </source>
</evidence>